<dbReference type="EC" id="4.1.1.130" evidence="1"/>
<dbReference type="EMBL" id="ABSV01000479">
    <property type="protein sequence ID" value="EDZ73050.1"/>
    <property type="molecule type" value="Genomic_DNA"/>
</dbReference>
<dbReference type="SMR" id="B5VG95"/>
<dbReference type="OrthoDB" id="25083at4893"/>
<dbReference type="UniPathway" id="UPA00232"/>
<dbReference type="Proteomes" id="UP000008988">
    <property type="component" value="Unassembled WGS sequence"/>
</dbReference>
<dbReference type="GO" id="GO:0031314">
    <property type="term" value="C:extrinsic component of mitochondrial inner membrane"/>
    <property type="evidence" value="ECO:0007669"/>
    <property type="project" value="UniProtKB-UniRule"/>
</dbReference>
<dbReference type="GO" id="GO:0006744">
    <property type="term" value="P:ubiquinone biosynthetic process"/>
    <property type="evidence" value="ECO:0007669"/>
    <property type="project" value="UniProtKB-UniRule"/>
</dbReference>
<dbReference type="HAMAP" id="MF_03111">
    <property type="entry name" value="Coq4"/>
    <property type="match status" value="1"/>
</dbReference>
<dbReference type="InterPro" id="IPR007715">
    <property type="entry name" value="Coq4"/>
</dbReference>
<dbReference type="InterPro" id="IPR027540">
    <property type="entry name" value="Coq4_euk"/>
</dbReference>
<dbReference type="PANTHER" id="PTHR12922">
    <property type="entry name" value="UBIQUINONE BIOSYNTHESIS PROTEIN"/>
    <property type="match status" value="1"/>
</dbReference>
<dbReference type="PANTHER" id="PTHR12922:SF7">
    <property type="entry name" value="UBIQUINONE BIOSYNTHESIS PROTEIN COQ4 HOMOLOG, MITOCHONDRIAL"/>
    <property type="match status" value="1"/>
</dbReference>
<dbReference type="Pfam" id="PF05019">
    <property type="entry name" value="Coq4"/>
    <property type="match status" value="1"/>
</dbReference>
<feature type="transit peptide" description="Mitochondrion" evidence="1">
    <location>
        <begin position="1"/>
        <end position="10"/>
    </location>
</feature>
<feature type="chain" id="PRO_0000388134" description="Ubiquinone biosynthesis protein COQ4, mitochondrial">
    <location>
        <begin position="11"/>
        <end position="335"/>
    </location>
</feature>
<feature type="binding site" evidence="1">
    <location>
        <position position="210"/>
    </location>
    <ligand>
        <name>Zn(2+)</name>
        <dbReference type="ChEBI" id="CHEBI:29105"/>
    </ligand>
</feature>
<feature type="binding site" evidence="1">
    <location>
        <position position="211"/>
    </location>
    <ligand>
        <name>Zn(2+)</name>
        <dbReference type="ChEBI" id="CHEBI:29105"/>
    </ligand>
</feature>
<feature type="binding site" evidence="1">
    <location>
        <position position="214"/>
    </location>
    <ligand>
        <name>Zn(2+)</name>
        <dbReference type="ChEBI" id="CHEBI:29105"/>
    </ligand>
</feature>
<feature type="binding site" evidence="1">
    <location>
        <position position="226"/>
    </location>
    <ligand>
        <name>Zn(2+)</name>
        <dbReference type="ChEBI" id="CHEBI:29105"/>
    </ligand>
</feature>
<gene>
    <name evidence="1" type="primary">COQ4</name>
    <name type="ORF">AWRI1631_44260</name>
</gene>
<keyword id="KW-0456">Lyase</keyword>
<keyword id="KW-0472">Membrane</keyword>
<keyword id="KW-0479">Metal-binding</keyword>
<keyword id="KW-0496">Mitochondrion</keyword>
<keyword id="KW-0999">Mitochondrion inner membrane</keyword>
<keyword id="KW-0809">Transit peptide</keyword>
<keyword id="KW-0831">Ubiquinone biosynthesis</keyword>
<keyword id="KW-0862">Zinc</keyword>
<protein>
    <recommendedName>
        <fullName evidence="1">Ubiquinone biosynthesis protein COQ4, mitochondrial</fullName>
    </recommendedName>
    <alternativeName>
        <fullName evidence="1">4-hydroxy-3-methoxy-5-polyprenylbenzoate decarboxylase</fullName>
        <ecNumber evidence="1">4.1.1.130</ecNumber>
    </alternativeName>
    <alternativeName>
        <fullName evidence="1">Coenzyme Q biosynthesis protein 4</fullName>
    </alternativeName>
</protein>
<reference key="1">
    <citation type="journal article" date="2008" name="FEMS Yeast Res.">
        <title>Comparative genome analysis of a Saccharomyces cerevisiae wine strain.</title>
        <authorList>
            <person name="Borneman A.R."/>
            <person name="Forgan A.H."/>
            <person name="Pretorius I.S."/>
            <person name="Chambers P.J."/>
        </authorList>
    </citation>
    <scope>NUCLEOTIDE SEQUENCE [LARGE SCALE GENOMIC DNA]</scope>
    <source>
        <strain>AWRI1631</strain>
    </source>
</reference>
<accession>B5VG95</accession>
<sequence>MLRLSLLRSTATLPVKCQRRGLILPAAAMYTLGSLIFGKEARLADAMERGELHNKNVDYAKEAEERTELRIRALANTRPMEPRYNGHVPLHRYEKLLLFAISGWNSFFHPEDGYNIVQLGEATALPVFLENLKQTMLSDSSGRRILKEQPNITTEILHMDKLAKLPHNTLGYVYYQWLKRENVSPDTRAPVKFIDDPMHAYIFKRYRQCHDFYHAITNMPIIIEGEITIKALEGANLGVPMAILGGILAPLRLKKVQRKRLYNIYLPWAVRTGLSCKPLINVYWEEMLEKDVTALRKELKITLPPDLRTMRKERAALRKEIDAKYNSQKRATTPA</sequence>
<name>COQ4_YEAS6</name>
<proteinExistence type="inferred from homology"/>
<comment type="function">
    <text evidence="1">Lyase that catalyzes the C1-decarboxylation of 4-hydroxy-3-methoxy-5-(all-trans-hexaprenyl)benzoic acid into 2-methoxy-6-(all-trans-hexaprenyl)phenol during ubiquinone biosynthesis.</text>
</comment>
<comment type="catalytic activity">
    <reaction evidence="1">
        <text>4-hydroxy-3-methoxy-5-(all-trans-hexaprenyl)benzoate + H(+) = 2-methoxy-6-(all-trans-hexaprenyl)phenol + CO2</text>
        <dbReference type="Rhea" id="RHEA:44768"/>
        <dbReference type="ChEBI" id="CHEBI:1109"/>
        <dbReference type="ChEBI" id="CHEBI:15378"/>
        <dbReference type="ChEBI" id="CHEBI:16526"/>
        <dbReference type="ChEBI" id="CHEBI:57916"/>
        <dbReference type="EC" id="4.1.1.130"/>
    </reaction>
</comment>
<comment type="cofactor">
    <cofactor evidence="1">
        <name>Zn(2+)</name>
        <dbReference type="ChEBI" id="CHEBI:29105"/>
    </cofactor>
</comment>
<comment type="pathway">
    <text evidence="1">Cofactor biosynthesis; ubiquinone biosynthesis.</text>
</comment>
<comment type="subunit">
    <text evidence="1">Component of a multi-subunit COQ enzyme complex, composed of at least COQ3, COQ4, COQ5, COQ6, COQ7 and COQ9. Interacts with COQ3.</text>
</comment>
<comment type="subcellular location">
    <subcellularLocation>
        <location evidence="1">Mitochondrion inner membrane</location>
        <topology evidence="1">Peripheral membrane protein</topology>
        <orientation evidence="1">Matrix side</orientation>
    </subcellularLocation>
</comment>
<comment type="similarity">
    <text evidence="1">Belongs to the COQ4 family.</text>
</comment>
<evidence type="ECO:0000255" key="1">
    <source>
        <dbReference type="HAMAP-Rule" id="MF_03111"/>
    </source>
</evidence>
<organism>
    <name type="scientific">Saccharomyces cerevisiae (strain AWRI1631)</name>
    <name type="common">Baker's yeast</name>
    <dbReference type="NCBI Taxonomy" id="545124"/>
    <lineage>
        <taxon>Eukaryota</taxon>
        <taxon>Fungi</taxon>
        <taxon>Dikarya</taxon>
        <taxon>Ascomycota</taxon>
        <taxon>Saccharomycotina</taxon>
        <taxon>Saccharomycetes</taxon>
        <taxon>Saccharomycetales</taxon>
        <taxon>Saccharomycetaceae</taxon>
        <taxon>Saccharomyces</taxon>
    </lineage>
</organism>